<comment type="function">
    <text evidence="2">Catalyzes the transamination of alpha-ketoglutarate with ornithine or N-acetylornithine and of glutamate-5-semialdehyde with glutamate and alanine.</text>
</comment>
<comment type="catalytic activity">
    <reaction evidence="2">
        <text>a 2-oxocarboxylate + L-ornithine = L-glutamate 5-semialdehyde + an L-alpha-amino acid</text>
        <dbReference type="Rhea" id="RHEA:13877"/>
        <dbReference type="ChEBI" id="CHEBI:35179"/>
        <dbReference type="ChEBI" id="CHEBI:46911"/>
        <dbReference type="ChEBI" id="CHEBI:58066"/>
        <dbReference type="ChEBI" id="CHEBI:59869"/>
        <dbReference type="EC" id="2.6.1.13"/>
    </reaction>
</comment>
<comment type="catalytic activity">
    <reaction evidence="2">
        <text>L-ornithine + 2-oxoglutarate = L-glutamate 5-semialdehyde + L-glutamate</text>
        <dbReference type="Rhea" id="RHEA:25160"/>
        <dbReference type="ChEBI" id="CHEBI:16810"/>
        <dbReference type="ChEBI" id="CHEBI:29985"/>
        <dbReference type="ChEBI" id="CHEBI:46911"/>
        <dbReference type="ChEBI" id="CHEBI:58066"/>
        <dbReference type="EC" id="2.6.1.13"/>
    </reaction>
    <physiologicalReaction direction="left-to-right" evidence="2">
        <dbReference type="Rhea" id="RHEA:25161"/>
    </physiologicalReaction>
</comment>
<comment type="cofactor">
    <cofactor evidence="1">
        <name>pyridoxal 5'-phosphate</name>
        <dbReference type="ChEBI" id="CHEBI:597326"/>
    </cofactor>
</comment>
<comment type="activity regulation">
    <text evidence="2">Unlike for mammalian OATs, activity is increased by TRX1-mediated reduction of the disulfide bond between Cys-154 and Cys-163. Binding to TRX1 may also induce conformational changes that facilitate substrate binding.</text>
</comment>
<comment type="pathway">
    <text evidence="1">Amino-acid biosynthesis; L-proline biosynthesis; L-glutamate 5-semialdehyde from L-ornithine: step 1/1.</text>
</comment>
<comment type="subunit">
    <text evidence="1">Homodimer.</text>
</comment>
<comment type="subcellular location">
    <subcellularLocation>
        <location evidence="3">Cytoplasm</location>
    </subcellularLocation>
</comment>
<comment type="PTM">
    <text evidence="2">The disulfide bond between Cys-154 and Cys-163 is reduced by TRX1 which increases OAT catalytic activity.</text>
</comment>
<comment type="similarity">
    <text evidence="3">Belongs to the class-III pyridoxal-phosphate-dependent aminotransferase family.</text>
</comment>
<organism evidence="5">
    <name type="scientific">Plasmodium chabaudi chabaudi</name>
    <dbReference type="NCBI Taxonomy" id="31271"/>
    <lineage>
        <taxon>Eukaryota</taxon>
        <taxon>Sar</taxon>
        <taxon>Alveolata</taxon>
        <taxon>Apicomplexa</taxon>
        <taxon>Aconoidasida</taxon>
        <taxon>Haemosporida</taxon>
        <taxon>Plasmodiidae</taxon>
        <taxon>Plasmodium</taxon>
        <taxon>Plasmodium (Vinckeia)</taxon>
    </lineage>
</organism>
<feature type="chain" id="PRO_0000233394" description="Ornithine aminotransferase">
    <location>
        <begin position="1"/>
        <end position="414"/>
    </location>
</feature>
<feature type="modified residue" description="N6-(pyridoxal phosphate)lysine" evidence="1">
    <location>
        <position position="262"/>
    </location>
</feature>
<feature type="disulfide bond" description="Reversible" evidence="2">
    <location>
        <begin position="154"/>
        <end position="163"/>
    </location>
</feature>
<keyword id="KW-0032">Aminotransferase</keyword>
<keyword id="KW-0963">Cytoplasm</keyword>
<keyword id="KW-1015">Disulfide bond</keyword>
<keyword id="KW-0663">Pyridoxal phosphate</keyword>
<keyword id="KW-0808">Transferase</keyword>
<proteinExistence type="inferred from homology"/>
<evidence type="ECO:0000250" key="1">
    <source>
        <dbReference type="UniProtKB" id="P04181"/>
    </source>
</evidence>
<evidence type="ECO:0000250" key="2">
    <source>
        <dbReference type="UniProtKB" id="Q6LFH8"/>
    </source>
</evidence>
<evidence type="ECO:0000305" key="3"/>
<evidence type="ECO:0000312" key="4">
    <source>
        <dbReference type="EMBL" id="VTZ66261.1"/>
    </source>
</evidence>
<evidence type="ECO:0000312" key="5">
    <source>
        <dbReference type="Proteomes" id="UP000071118"/>
    </source>
</evidence>
<protein>
    <recommendedName>
        <fullName evidence="2">Ornithine aminotransferase</fullName>
        <ecNumber evidence="2">2.6.1.13</ecNumber>
    </recommendedName>
    <alternativeName>
        <fullName evidence="3">Ornithine--oxo-acid aminotransferase</fullName>
    </alternativeName>
</protein>
<reference evidence="5" key="1">
    <citation type="journal article" date="2014" name="BMC Biol.">
        <title>A comprehensive evaluation of rodent malaria parasite genomes and gene expression.</title>
        <authorList>
            <person name="Otto T.D."/>
            <person name="Bohme U."/>
            <person name="Jackson A.P."/>
            <person name="Hunt M."/>
            <person name="Franke-Fayard B."/>
            <person name="Hoeijmakers W.A."/>
            <person name="Religa A.A."/>
            <person name="Robertson L."/>
            <person name="Sanders M."/>
            <person name="Ogun S.A."/>
            <person name="Cunningham D."/>
            <person name="Erhart A."/>
            <person name="Billker O."/>
            <person name="Khan S.M."/>
            <person name="Stunnenberg H.G."/>
            <person name="Langhorne J."/>
            <person name="Holder A.A."/>
            <person name="Waters A.P."/>
            <person name="Newbold C.I."/>
            <person name="Pain A."/>
            <person name="Berriman M."/>
            <person name="Janse C.J."/>
        </authorList>
    </citation>
    <scope>NUCLEOTIDE SEQUENCE [LARGE SCALE GENOMIC DNA]</scope>
    <source>
        <strain evidence="5">AS</strain>
    </source>
</reference>
<accession>Q4XWV5</accession>
<accession>A0A4V0JZW9</accession>
<sequence length="414" mass="46043">MEFVKDLKTPEDYINNELKYGAHNYDPIPVVLKRAKGVFVYDVNDKRYYDFLSAYSSVNQGHCHPDILNAMINQAKNLTICSRAFFSVSLGICERYLTNLLGYDKVLMMNTGAEANETAYKLCRKWGYEVKKIPENMAKIVVCKNNFSGRTLGCISASTTNKCTSNFGPFAPQFSKVPYNDLEALEEELKDPNVCGFIVEPVQGEAGVIVPSDNYLPGVYNLCKKYNVLFVADEVQTGLGRTGKLLCVHHYNVKPDVVLLGKALSGGHYPISAVLANDSVMLVIKPGEHGSTYGGNPLAASICVESLNVLINEKLCENADKLGGPFLEGLKKELKDSKIIRDIRGKGLLCAIEFKNELVNVLDICLKLKENGLITRDVHDKTIRLTPPLCITKEQLDECTEIIVKTVKFFDEKF</sequence>
<name>OAT_PLACU</name>
<gene>
    <name evidence="2" type="primary">OAT</name>
    <name type="ORF">PC001183.02.0</name>
    <name evidence="4" type="ORF">PCHAS_0108000</name>
</gene>
<dbReference type="EC" id="2.6.1.13" evidence="2"/>
<dbReference type="EMBL" id="LK022878">
    <property type="protein sequence ID" value="VTZ66261.1"/>
    <property type="molecule type" value="Genomic_DNA"/>
</dbReference>
<dbReference type="RefSeq" id="XP_744760.1">
    <property type="nucleotide sequence ID" value="XM_739667.1"/>
</dbReference>
<dbReference type="SMR" id="Q4XWV5"/>
<dbReference type="GeneID" id="3497879"/>
<dbReference type="KEGG" id="pcb:PCHAS_0108000"/>
<dbReference type="VEuPathDB" id="PlasmoDB:PCHAS_0108000"/>
<dbReference type="eggNOG" id="KOG1402">
    <property type="taxonomic scope" value="Eukaryota"/>
</dbReference>
<dbReference type="HOGENOM" id="CLU_016922_10_3_1"/>
<dbReference type="OrthoDB" id="425114at2759"/>
<dbReference type="UniPathway" id="UPA00098">
    <property type="reaction ID" value="UER00358"/>
</dbReference>
<dbReference type="Proteomes" id="UP000071118">
    <property type="component" value="Chromosome 1"/>
</dbReference>
<dbReference type="GO" id="GO:0005737">
    <property type="term" value="C:cytoplasm"/>
    <property type="evidence" value="ECO:0007669"/>
    <property type="project" value="UniProtKB-SubCell"/>
</dbReference>
<dbReference type="GO" id="GO:0042802">
    <property type="term" value="F:identical protein binding"/>
    <property type="evidence" value="ECO:0007669"/>
    <property type="project" value="TreeGrafter"/>
</dbReference>
<dbReference type="GO" id="GO:0004587">
    <property type="term" value="F:ornithine aminotransferase activity"/>
    <property type="evidence" value="ECO:0007669"/>
    <property type="project" value="UniProtKB-EC"/>
</dbReference>
<dbReference type="GO" id="GO:0030170">
    <property type="term" value="F:pyridoxal phosphate binding"/>
    <property type="evidence" value="ECO:0007669"/>
    <property type="project" value="InterPro"/>
</dbReference>
<dbReference type="GO" id="GO:0019544">
    <property type="term" value="P:arginine catabolic process to glutamate"/>
    <property type="evidence" value="ECO:0007669"/>
    <property type="project" value="TreeGrafter"/>
</dbReference>
<dbReference type="GO" id="GO:0010121">
    <property type="term" value="P:arginine catabolic process to proline via ornithine"/>
    <property type="evidence" value="ECO:0007669"/>
    <property type="project" value="TreeGrafter"/>
</dbReference>
<dbReference type="GO" id="GO:0055129">
    <property type="term" value="P:L-proline biosynthetic process"/>
    <property type="evidence" value="ECO:0007669"/>
    <property type="project" value="UniProtKB-UniPathway"/>
</dbReference>
<dbReference type="CDD" id="cd00610">
    <property type="entry name" value="OAT_like"/>
    <property type="match status" value="1"/>
</dbReference>
<dbReference type="FunFam" id="3.40.640.10:FF:000011">
    <property type="entry name" value="Ornithine aminotransferase"/>
    <property type="match status" value="1"/>
</dbReference>
<dbReference type="FunFam" id="3.90.1150.10:FF:000152">
    <property type="entry name" value="Ornithine aminotransferase"/>
    <property type="match status" value="1"/>
</dbReference>
<dbReference type="Gene3D" id="3.90.1150.10">
    <property type="entry name" value="Aspartate Aminotransferase, domain 1"/>
    <property type="match status" value="1"/>
</dbReference>
<dbReference type="Gene3D" id="3.40.640.10">
    <property type="entry name" value="Type I PLP-dependent aspartate aminotransferase-like (Major domain)"/>
    <property type="match status" value="1"/>
</dbReference>
<dbReference type="InterPro" id="IPR005814">
    <property type="entry name" value="Aminotrans_3"/>
</dbReference>
<dbReference type="InterPro" id="IPR049704">
    <property type="entry name" value="Aminotrans_3_PPA_site"/>
</dbReference>
<dbReference type="InterPro" id="IPR050103">
    <property type="entry name" value="Class-III_PLP-dep_AT"/>
</dbReference>
<dbReference type="InterPro" id="IPR010164">
    <property type="entry name" value="Orn_aminotrans"/>
</dbReference>
<dbReference type="InterPro" id="IPR015424">
    <property type="entry name" value="PyrdxlP-dep_Trfase"/>
</dbReference>
<dbReference type="InterPro" id="IPR015421">
    <property type="entry name" value="PyrdxlP-dep_Trfase_major"/>
</dbReference>
<dbReference type="InterPro" id="IPR015422">
    <property type="entry name" value="PyrdxlP-dep_Trfase_small"/>
</dbReference>
<dbReference type="NCBIfam" id="TIGR01885">
    <property type="entry name" value="Orn_aminotrans"/>
    <property type="match status" value="1"/>
</dbReference>
<dbReference type="PANTHER" id="PTHR11986">
    <property type="entry name" value="AMINOTRANSFERASE CLASS III"/>
    <property type="match status" value="1"/>
</dbReference>
<dbReference type="PANTHER" id="PTHR11986:SF18">
    <property type="entry name" value="ORNITHINE AMINOTRANSFERASE, MITOCHONDRIAL"/>
    <property type="match status" value="1"/>
</dbReference>
<dbReference type="Pfam" id="PF00202">
    <property type="entry name" value="Aminotran_3"/>
    <property type="match status" value="1"/>
</dbReference>
<dbReference type="PIRSF" id="PIRSF000521">
    <property type="entry name" value="Transaminase_4ab_Lys_Orn"/>
    <property type="match status" value="1"/>
</dbReference>
<dbReference type="SUPFAM" id="SSF53383">
    <property type="entry name" value="PLP-dependent transferases"/>
    <property type="match status" value="1"/>
</dbReference>
<dbReference type="PROSITE" id="PS00600">
    <property type="entry name" value="AA_TRANSFER_CLASS_3"/>
    <property type="match status" value="1"/>
</dbReference>